<name>LSC_GLUDI</name>
<protein>
    <recommendedName>
        <fullName evidence="6">Levansucrase</fullName>
        <ecNumber evidence="3 4">2.4.1.10</ecNumber>
    </recommendedName>
    <alternativeName>
        <fullName>Beta-D-fructofuranosyl transferase</fullName>
    </alternativeName>
    <alternativeName>
        <fullName>Sucrose 6-fructosyl transferase</fullName>
    </alternativeName>
</protein>
<feature type="signal peptide" evidence="9">
    <location>
        <begin position="1"/>
        <end position="30"/>
    </location>
</feature>
<feature type="chain" id="PRO_0000012246" description="Levansucrase" evidence="9">
    <location>
        <begin position="31"/>
        <end position="584"/>
    </location>
</feature>
<feature type="active site" description="Nucleophile" evidence="10">
    <location>
        <position position="135"/>
    </location>
</feature>
<feature type="active site" description="Proton donor/acceptor" evidence="10">
    <location>
        <position position="401"/>
    </location>
</feature>
<feature type="binding site" evidence="1">
    <location>
        <position position="134"/>
    </location>
    <ligand>
        <name>sucrose</name>
        <dbReference type="ChEBI" id="CHEBI:17992"/>
    </ligand>
</feature>
<feature type="binding site" evidence="1">
    <location>
        <position position="135"/>
    </location>
    <ligand>
        <name>sucrose</name>
        <dbReference type="ChEBI" id="CHEBI:17992"/>
    </ligand>
</feature>
<feature type="binding site" evidence="1">
    <location>
        <position position="225"/>
    </location>
    <ligand>
        <name>sucrose</name>
        <dbReference type="ChEBI" id="CHEBI:17992"/>
    </ligand>
</feature>
<feature type="binding site" evidence="1">
    <location>
        <position position="308"/>
    </location>
    <ligand>
        <name>sucrose</name>
        <dbReference type="ChEBI" id="CHEBI:17992"/>
    </ligand>
</feature>
<feature type="binding site" evidence="1">
    <location>
        <position position="309"/>
    </location>
    <ligand>
        <name>sucrose</name>
        <dbReference type="ChEBI" id="CHEBI:17992"/>
    </ligand>
</feature>
<feature type="site" description="Transition state stabilizer" evidence="10">
    <location>
        <position position="309"/>
    </location>
</feature>
<feature type="modified residue" description="Pyrrolidone carboxylic acid" evidence="2">
    <location>
        <position position="31"/>
    </location>
</feature>
<feature type="disulfide bond" evidence="2 3 11">
    <location>
        <begin position="339"/>
        <end position="395"/>
    </location>
</feature>
<feature type="mutagenesis site" description="2300-fold decrease in kcat for sucrose hydrolysis." evidence="3">
    <original>D</original>
    <variation>N</variation>
    <location>
        <position position="135"/>
    </location>
</feature>
<feature type="mutagenesis site" description="60-fold decrease in kcat for sucrose hydrolysis." evidence="3">
    <original>C</original>
    <variation>S</variation>
    <location>
        <position position="339"/>
    </location>
</feature>
<feature type="mutagenesis site" description="60-fold decrease in kcat for sucrose hydrolysis." evidence="3">
    <original>C</original>
    <variation>S</variation>
    <location>
        <position position="395"/>
    </location>
</feature>
<feature type="helix" evidence="12">
    <location>
        <begin position="90"/>
        <end position="93"/>
    </location>
</feature>
<feature type="helix" evidence="12">
    <location>
        <begin position="95"/>
        <end position="99"/>
    </location>
</feature>
<feature type="helix" evidence="12">
    <location>
        <begin position="113"/>
        <end position="115"/>
    </location>
</feature>
<feature type="strand" evidence="12">
    <location>
        <begin position="132"/>
        <end position="140"/>
    </location>
</feature>
<feature type="strand" evidence="12">
    <location>
        <begin position="146"/>
        <end position="149"/>
    </location>
</feature>
<feature type="strand" evidence="12">
    <location>
        <begin position="152"/>
        <end position="160"/>
    </location>
</feature>
<feature type="helix" evidence="12">
    <location>
        <begin position="168"/>
        <end position="170"/>
    </location>
</feature>
<feature type="helix" evidence="12">
    <location>
        <begin position="172"/>
        <end position="174"/>
    </location>
</feature>
<feature type="strand" evidence="12">
    <location>
        <begin position="176"/>
        <end position="185"/>
    </location>
</feature>
<feature type="helix" evidence="12">
    <location>
        <begin position="188"/>
        <end position="190"/>
    </location>
</feature>
<feature type="strand" evidence="12">
    <location>
        <begin position="198"/>
        <end position="204"/>
    </location>
</feature>
<feature type="helix" evidence="12">
    <location>
        <begin position="208"/>
        <end position="212"/>
    </location>
</feature>
<feature type="strand" evidence="12">
    <location>
        <begin position="219"/>
        <end position="232"/>
    </location>
</feature>
<feature type="strand" evidence="12">
    <location>
        <begin position="237"/>
        <end position="249"/>
    </location>
</feature>
<feature type="strand" evidence="12">
    <location>
        <begin position="255"/>
        <end position="272"/>
    </location>
</feature>
<feature type="strand" evidence="12">
    <location>
        <begin position="277"/>
        <end position="289"/>
    </location>
</feature>
<feature type="strand" evidence="12">
    <location>
        <begin position="293"/>
        <end position="296"/>
    </location>
</feature>
<feature type="turn" evidence="12">
    <location>
        <begin position="299"/>
        <end position="301"/>
    </location>
</feature>
<feature type="strand" evidence="12">
    <location>
        <begin position="308"/>
        <end position="314"/>
    </location>
</feature>
<feature type="strand" evidence="12">
    <location>
        <begin position="322"/>
        <end position="332"/>
    </location>
</feature>
<feature type="helix" evidence="12">
    <location>
        <begin position="341"/>
        <end position="344"/>
    </location>
</feature>
<feature type="helix" evidence="12">
    <location>
        <begin position="356"/>
        <end position="361"/>
    </location>
</feature>
<feature type="helix" evidence="12">
    <location>
        <begin position="364"/>
        <end position="366"/>
    </location>
</feature>
<feature type="strand" evidence="12">
    <location>
        <begin position="369"/>
        <end position="378"/>
    </location>
</feature>
<feature type="strand" evidence="12">
    <location>
        <begin position="384"/>
        <end position="392"/>
    </location>
</feature>
<feature type="turn" evidence="12">
    <location>
        <begin position="394"/>
        <end position="396"/>
    </location>
</feature>
<feature type="strand" evidence="12">
    <location>
        <begin position="401"/>
        <end position="408"/>
    </location>
</feature>
<feature type="strand" evidence="12">
    <location>
        <begin position="411"/>
        <end position="418"/>
    </location>
</feature>
<feature type="helix" evidence="12">
    <location>
        <begin position="420"/>
        <end position="422"/>
    </location>
</feature>
<feature type="strand" evidence="12">
    <location>
        <begin position="431"/>
        <end position="443"/>
    </location>
</feature>
<feature type="strand" evidence="12">
    <location>
        <begin position="446"/>
        <end position="448"/>
    </location>
</feature>
<feature type="turn" evidence="12">
    <location>
        <begin position="449"/>
        <end position="452"/>
    </location>
</feature>
<feature type="strand" evidence="12">
    <location>
        <begin position="454"/>
        <end position="457"/>
    </location>
</feature>
<feature type="strand" evidence="12">
    <location>
        <begin position="462"/>
        <end position="464"/>
    </location>
</feature>
<feature type="strand" evidence="12">
    <location>
        <begin position="469"/>
        <end position="471"/>
    </location>
</feature>
<feature type="strand" evidence="12">
    <location>
        <begin position="474"/>
        <end position="476"/>
    </location>
</feature>
<feature type="turn" evidence="12">
    <location>
        <begin position="478"/>
        <end position="481"/>
    </location>
</feature>
<feature type="strand" evidence="12">
    <location>
        <begin position="482"/>
        <end position="489"/>
    </location>
</feature>
<feature type="helix" evidence="12">
    <location>
        <begin position="490"/>
        <end position="492"/>
    </location>
</feature>
<feature type="strand" evidence="12">
    <location>
        <begin position="493"/>
        <end position="503"/>
    </location>
</feature>
<feature type="strand" evidence="12">
    <location>
        <begin position="505"/>
        <end position="509"/>
    </location>
</feature>
<feature type="strand" evidence="12">
    <location>
        <begin position="513"/>
        <end position="518"/>
    </location>
</feature>
<feature type="strand" evidence="12">
    <location>
        <begin position="521"/>
        <end position="524"/>
    </location>
</feature>
<feature type="strand" evidence="12">
    <location>
        <begin position="542"/>
        <end position="545"/>
    </location>
</feature>
<feature type="helix" evidence="12">
    <location>
        <begin position="548"/>
        <end position="551"/>
    </location>
</feature>
<organism>
    <name type="scientific">Gluconacetobacter diazotrophicus</name>
    <name type="common">Acetobacter diazotrophicus</name>
    <dbReference type="NCBI Taxonomy" id="33996"/>
    <lineage>
        <taxon>Bacteria</taxon>
        <taxon>Pseudomonadati</taxon>
        <taxon>Pseudomonadota</taxon>
        <taxon>Alphaproteobacteria</taxon>
        <taxon>Acetobacterales</taxon>
        <taxon>Acetobacteraceae</taxon>
        <taxon>Gluconacetobacter</taxon>
    </lineage>
</organism>
<comment type="function">
    <text evidence="4 5">Catalyzes the synthesis of levan, a fructose polymer, by transferring the fructosyl moiety from sucrose to a growing acceptor molecule (PubMed:7619044). Also displays sucrose hydrolase activity (PubMed:7619044, PubMed:8704949). In vitro, catalyzes transfructosylation from sucrose to a variety of acceptors including water (sucrose hydrolysis), glucose (exchange reaction), fructan (polymerase reaction) and sucrose (oligofructoside synthesis) (PubMed:7619044). Levansucrase of G.diazotrophicus SRT4, unlike the enzyme of B.subtilis, causes accumulation of large quantities of tri- and tetrasaccharides but small quantities of high-molecular-mass levan (PubMed:7619044). It may act more as a sucrose hydrolase than as a fructan polymerase, and may be the key enzyme in the sucrose metabolism of G.diazotrophicus SRT4 (PubMed:8704949).</text>
</comment>
<comment type="catalytic activity">
    <reaction evidence="3 4">
        <text>[6)-beta-D-fructofuranosyl-(2-&gt;](n) alpha-D-glucopyranoside + sucrose = [6)-beta-D-fructofuranosyl-(2-&gt;](n+1) alpha-D-glucopyranoside + D-glucose</text>
        <dbReference type="Rhea" id="RHEA:13653"/>
        <dbReference type="Rhea" id="RHEA-COMP:13093"/>
        <dbReference type="Rhea" id="RHEA-COMP:13094"/>
        <dbReference type="ChEBI" id="CHEBI:4167"/>
        <dbReference type="ChEBI" id="CHEBI:17992"/>
        <dbReference type="ChEBI" id="CHEBI:134464"/>
        <dbReference type="EC" id="2.4.1.10"/>
    </reaction>
</comment>
<comment type="activity regulation">
    <text evidence="4">Strongly inhibited by Hg(2+) and slightly activated by Co(2+) (PubMed:7619044). Not inhibited by the metal ion chelator EDTA, suggesting that this enzyme does not need a metal cofactor (PubMed:7619044).</text>
</comment>
<comment type="biophysicochemical properties">
    <kinetics>
        <KM evidence="3">11.9 mM for sucrose</KM>
        <text evidence="3">kcat is 3900 min(-1).</text>
    </kinetics>
    <phDependence>
        <text evidence="4">Optimum pH is 5.0.</text>
    </phDependence>
</comment>
<comment type="subunit">
    <text evidence="2">Monomer.</text>
</comment>
<comment type="subcellular location">
    <subcellularLocation>
        <location evidence="4 5">Secreted</location>
    </subcellularLocation>
</comment>
<comment type="induction">
    <text evidence="4">Constitutively expressed.</text>
</comment>
<comment type="PTM">
    <text evidence="2">The N-terminus is blocked (PubMed:10214721). The N-terminal Gln is cyclized to a pyroglutamic acid (PubMed:10214721).</text>
</comment>
<comment type="disruption phenotype">
    <text evidence="5">Disruption of the gene results in a mutant lacking both levansucrase activity and the ability to utilize sucrose as a carbon source.</text>
</comment>
<comment type="similarity">
    <text evidence="8">Belongs to the glycosyl hydrolase 68 family.</text>
</comment>
<accession>Q43998</accession>
<sequence>MAHVRRKVATLNMALAGSLLMVLGAQSALAQGNFSRQEAARMAHRPGVMPRGGPLFPGRSLAGVPGFPLPSIHTQQAYDPQSDFTARWTRADALQIKAHSDATVAAGQNSLPAQLTMPNIPADFPVINPDVWVWDTWTLIDKHADQFSYNGWEVIFCLTADPNAGYGFDDRHVHARIGFFYRRAGIPASRRPVNGGWTYGGHLFPDGASAQVYAGQTYTNQAEWSGSSRLMQIHGNTVSVFYTDVAFNRDANANNITPPQAIITQTLGRIHADFNHVWFTGFTAHTPLLQPDGVLYQNGAQNEFFNFRDPFTFEDPKHPGVNYMVFEGNTAGQRGVANCTEADLGFRPNDPNAETLQEVLDSGAYYQKANIGLAIATDSTLSKWKFLSPLISANCVNDQTERPQVYLHNGKYYIFTISHRTTFAAGVDGPDGVYGFVGDGIRSDFQPMNYGSGLTMGNPTDLNTAAGTDFDPSPDQNPRAFQSYSHYVMPGGLVESFIDTVENRRGGTLAPTVRVRIAQNASAVDLRYGNGGLGGYGDIPANRADVNIAGFIQDLFGQPTSGLAAQASTNNAQVLAQVRQFLNQ</sequence>
<proteinExistence type="evidence at protein level"/>
<evidence type="ECO:0000250" key="1">
    <source>
        <dbReference type="UniProtKB" id="P05655"/>
    </source>
</evidence>
<evidence type="ECO:0000269" key="2">
    <source>
    </source>
</evidence>
<evidence type="ECO:0000269" key="3">
    <source>
    </source>
</evidence>
<evidence type="ECO:0000269" key="4">
    <source>
    </source>
</evidence>
<evidence type="ECO:0000269" key="5">
    <source>
    </source>
</evidence>
<evidence type="ECO:0000303" key="6">
    <source>
    </source>
</evidence>
<evidence type="ECO:0000303" key="7">
    <source>
    </source>
</evidence>
<evidence type="ECO:0000305" key="8"/>
<evidence type="ECO:0000305" key="9">
    <source>
    </source>
</evidence>
<evidence type="ECO:0000305" key="10">
    <source>
    </source>
</evidence>
<evidence type="ECO:0007744" key="11">
    <source>
        <dbReference type="PDB" id="1W18"/>
    </source>
</evidence>
<evidence type="ECO:0007829" key="12">
    <source>
        <dbReference type="PDB" id="1W18"/>
    </source>
</evidence>
<gene>
    <name evidence="7" type="primary">lsdA</name>
</gene>
<dbReference type="EC" id="2.4.1.10" evidence="3 4"/>
<dbReference type="EMBL" id="L41732">
    <property type="protein sequence ID" value="AAB36606.1"/>
    <property type="molecule type" value="Genomic_DNA"/>
</dbReference>
<dbReference type="RefSeq" id="WP_012222901.1">
    <property type="nucleotide sequence ID" value="NZ_VITL01000003.1"/>
</dbReference>
<dbReference type="PDB" id="1W18">
    <property type="method" value="X-ray"/>
    <property type="resolution" value="2.50 A"/>
    <property type="chains" value="A/B=62-554"/>
</dbReference>
<dbReference type="PDBsum" id="1W18"/>
<dbReference type="SMR" id="Q43998"/>
<dbReference type="CAZy" id="GH68">
    <property type="family name" value="Glycoside Hydrolase Family 68"/>
</dbReference>
<dbReference type="OMA" id="HYIEDNG"/>
<dbReference type="BRENDA" id="2.4.1.10">
    <property type="organism ID" value="2464"/>
</dbReference>
<dbReference type="BRENDA" id="3.2.1.65">
    <property type="organism ID" value="2464"/>
</dbReference>
<dbReference type="SABIO-RK" id="Q43998"/>
<dbReference type="EvolutionaryTrace" id="Q43998"/>
<dbReference type="GO" id="GO:0005576">
    <property type="term" value="C:extracellular region"/>
    <property type="evidence" value="ECO:0007669"/>
    <property type="project" value="UniProtKB-SubCell"/>
</dbReference>
<dbReference type="GO" id="GO:0050053">
    <property type="term" value="F:levansucrase activity"/>
    <property type="evidence" value="ECO:0007669"/>
    <property type="project" value="UniProtKB-EC"/>
</dbReference>
<dbReference type="GO" id="GO:0009758">
    <property type="term" value="P:carbohydrate utilization"/>
    <property type="evidence" value="ECO:0007669"/>
    <property type="project" value="InterPro"/>
</dbReference>
<dbReference type="CDD" id="cd08997">
    <property type="entry name" value="GH68"/>
    <property type="match status" value="1"/>
</dbReference>
<dbReference type="Gene3D" id="2.115.10.20">
    <property type="entry name" value="Glycosyl hydrolase domain, family 43"/>
    <property type="match status" value="1"/>
</dbReference>
<dbReference type="InterPro" id="IPR003469">
    <property type="entry name" value="Glyco_hydro_68"/>
</dbReference>
<dbReference type="InterPro" id="IPR023296">
    <property type="entry name" value="Glyco_hydro_beta-prop_sf"/>
</dbReference>
<dbReference type="Pfam" id="PF02435">
    <property type="entry name" value="Glyco_hydro_68"/>
    <property type="match status" value="1"/>
</dbReference>
<dbReference type="SUPFAM" id="SSF75005">
    <property type="entry name" value="Arabinanase/levansucrase/invertase"/>
    <property type="match status" value="1"/>
</dbReference>
<reference key="1">
    <citation type="journal article" date="1996" name="Microbiology">
        <title>Molecular characterization of the levansucrase gene from the endophytic sugarcane bacterium Acetobacter diazotrophicus SRT4.</title>
        <authorList>
            <person name="Arrieta J."/>
            <person name="Hernandez L."/>
            <person name="Coego A."/>
            <person name="Suarez V."/>
            <person name="Balmori E."/>
            <person name="Menendez C."/>
            <person name="Petit-Glatron M.-F."/>
            <person name="Chambert R."/>
            <person name="Selman-Housein G."/>
        </authorList>
    </citation>
    <scope>NUCLEOTIDE SEQUENCE [GENOMIC DNA]</scope>
    <scope>PROTEIN SEQUENCE OF 52-61</scope>
    <scope>FUNCTION</scope>
    <scope>SUBCELLULAR LOCATION</scope>
    <scope>DISRUPTION PHENOTYPE</scope>
    <source>
        <strain>SRT4 / CBS 550.94</strain>
    </source>
</reference>
<reference key="2">
    <citation type="journal article" date="1995" name="Biochem. J.">
        <title>Isolation and enzymic properties of levansucrase secreted by Acetobacter diazotrophicus SRT4, a bacterium associated with sugar cane.</title>
        <authorList>
            <person name="Hernandez L."/>
            <person name="Arrieta J."/>
            <person name="Menendez C."/>
            <person name="Vazquez R."/>
            <person name="Coego A."/>
            <person name="Suarez V."/>
            <person name="Selman G."/>
            <person name="Petit-Glatron M.F."/>
            <person name="Chambert R."/>
        </authorList>
    </citation>
    <scope>FUNCTION</scope>
    <scope>CATALYTIC ACTIVITY</scope>
    <scope>ACTIVITY REGULATION</scope>
    <scope>BIOPHYSICOCHEMICAL PROPERTIES</scope>
    <scope>SUBCELLULAR LOCATION</scope>
    <scope>INDUCTION</scope>
    <source>
        <strain>SRT4 / CBS 550.94</strain>
    </source>
</reference>
<reference key="3">
    <citation type="journal article" date="1999" name="J. Mass Spectrom.">
        <title>Structural characterization of Acetobacter diazotropicus levansucrase by matrix-assisted laser desorption/ionization mass spectrometry: identification of an N-terminal blocking group and a free-thiol cysteine residue.</title>
        <authorList>
            <person name="Betancourt L."/>
            <person name="Takao T."/>
            <person name="Hernandez L."/>
            <person name="Padron G."/>
            <person name="Shimonishi Y."/>
        </authorList>
    </citation>
    <scope>DISULFIDE BOND</scope>
    <scope>PYROGLUTAMATE FORMATION AT GLN-31</scope>
    <scope>SUBUNIT</scope>
    <scope>IDENTIFICATION BY MASS SPECTROMETRY</scope>
</reference>
<reference evidence="11" key="4">
    <citation type="journal article" date="2005" name="Biochem. J.">
        <title>Crystal structure of levansucrase from the Gram-negative bacterium Gluconacetobacter diazotrophicus.</title>
        <authorList>
            <person name="Martinez-Fleites C."/>
            <person name="Ortiz-Lombardia M."/>
            <person name="Pons T."/>
            <person name="Tarbouriech N."/>
            <person name="Taylor E.J."/>
            <person name="Arrieta J.G."/>
            <person name="Hernandez L."/>
            <person name="Davies G.J."/>
        </authorList>
    </citation>
    <scope>X-RAY CRYSTALLOGRAPHY (2.50 ANGSTROMS) OF 62-554</scope>
    <scope>CATALYTIC ACTIVITY</scope>
    <scope>BIOPHYSICOCHEMICAL PROPERTIES</scope>
    <scope>DISULFIDE BONDS</scope>
    <scope>ACTIVE SITE</scope>
    <scope>MUTAGENESIS OF ASP-135; CYS-339 AND CYS-395</scope>
</reference>
<keyword id="KW-0002">3D-structure</keyword>
<keyword id="KW-0119">Carbohydrate metabolism</keyword>
<keyword id="KW-0903">Direct protein sequencing</keyword>
<keyword id="KW-1015">Disulfide bond</keyword>
<keyword id="KW-0328">Glycosyltransferase</keyword>
<keyword id="KW-0873">Pyrrolidone carboxylic acid</keyword>
<keyword id="KW-0964">Secreted</keyword>
<keyword id="KW-0732">Signal</keyword>
<keyword id="KW-0808">Transferase</keyword>